<gene>
    <name evidence="1" type="primary">panC</name>
    <name type="ordered locus">BB4438</name>
</gene>
<reference key="1">
    <citation type="journal article" date="2003" name="Nat. Genet.">
        <title>Comparative analysis of the genome sequences of Bordetella pertussis, Bordetella parapertussis and Bordetella bronchiseptica.</title>
        <authorList>
            <person name="Parkhill J."/>
            <person name="Sebaihia M."/>
            <person name="Preston A."/>
            <person name="Murphy L.D."/>
            <person name="Thomson N.R."/>
            <person name="Harris D.E."/>
            <person name="Holden M.T.G."/>
            <person name="Churcher C.M."/>
            <person name="Bentley S.D."/>
            <person name="Mungall K.L."/>
            <person name="Cerdeno-Tarraga A.-M."/>
            <person name="Temple L."/>
            <person name="James K.D."/>
            <person name="Harris B."/>
            <person name="Quail M.A."/>
            <person name="Achtman M."/>
            <person name="Atkin R."/>
            <person name="Baker S."/>
            <person name="Basham D."/>
            <person name="Bason N."/>
            <person name="Cherevach I."/>
            <person name="Chillingworth T."/>
            <person name="Collins M."/>
            <person name="Cronin A."/>
            <person name="Davis P."/>
            <person name="Doggett J."/>
            <person name="Feltwell T."/>
            <person name="Goble A."/>
            <person name="Hamlin N."/>
            <person name="Hauser H."/>
            <person name="Holroyd S."/>
            <person name="Jagels K."/>
            <person name="Leather S."/>
            <person name="Moule S."/>
            <person name="Norberczak H."/>
            <person name="O'Neil S."/>
            <person name="Ormond D."/>
            <person name="Price C."/>
            <person name="Rabbinowitsch E."/>
            <person name="Rutter S."/>
            <person name="Sanders M."/>
            <person name="Saunders D."/>
            <person name="Seeger K."/>
            <person name="Sharp S."/>
            <person name="Simmonds M."/>
            <person name="Skelton J."/>
            <person name="Squares R."/>
            <person name="Squares S."/>
            <person name="Stevens K."/>
            <person name="Unwin L."/>
            <person name="Whitehead S."/>
            <person name="Barrell B.G."/>
            <person name="Maskell D.J."/>
        </authorList>
    </citation>
    <scope>NUCLEOTIDE SEQUENCE [LARGE SCALE GENOMIC DNA]</scope>
    <source>
        <strain>ATCC BAA-588 / NCTC 13252 / RB50</strain>
    </source>
</reference>
<protein>
    <recommendedName>
        <fullName evidence="1">Pantothenate synthetase</fullName>
        <shortName evidence="1">PS</shortName>
        <ecNumber evidence="1">6.3.2.1</ecNumber>
    </recommendedName>
    <alternativeName>
        <fullName evidence="1">Pantoate--beta-alanine ligase</fullName>
    </alternativeName>
    <alternativeName>
        <fullName evidence="1">Pantoate-activating enzyme</fullName>
    </alternativeName>
</protein>
<feature type="chain" id="PRO_0000305406" description="Pantothenate synthetase">
    <location>
        <begin position="1"/>
        <end position="280"/>
    </location>
</feature>
<feature type="active site" description="Proton donor" evidence="1">
    <location>
        <position position="33"/>
    </location>
</feature>
<feature type="binding site" evidence="1">
    <location>
        <begin position="26"/>
        <end position="33"/>
    </location>
    <ligand>
        <name>ATP</name>
        <dbReference type="ChEBI" id="CHEBI:30616"/>
    </ligand>
</feature>
<feature type="binding site" evidence="1">
    <location>
        <position position="57"/>
    </location>
    <ligand>
        <name>(R)-pantoate</name>
        <dbReference type="ChEBI" id="CHEBI:15980"/>
    </ligand>
</feature>
<feature type="binding site" evidence="1">
    <location>
        <position position="57"/>
    </location>
    <ligand>
        <name>beta-alanine</name>
        <dbReference type="ChEBI" id="CHEBI:57966"/>
    </ligand>
</feature>
<feature type="binding site" evidence="1">
    <location>
        <begin position="145"/>
        <end position="148"/>
    </location>
    <ligand>
        <name>ATP</name>
        <dbReference type="ChEBI" id="CHEBI:30616"/>
    </ligand>
</feature>
<feature type="binding site" evidence="1">
    <location>
        <position position="151"/>
    </location>
    <ligand>
        <name>(R)-pantoate</name>
        <dbReference type="ChEBI" id="CHEBI:15980"/>
    </ligand>
</feature>
<feature type="binding site" evidence="1">
    <location>
        <position position="174"/>
    </location>
    <ligand>
        <name>ATP</name>
        <dbReference type="ChEBI" id="CHEBI:30616"/>
    </ligand>
</feature>
<feature type="binding site" evidence="1">
    <location>
        <begin position="182"/>
        <end position="185"/>
    </location>
    <ligand>
        <name>ATP</name>
        <dbReference type="ChEBI" id="CHEBI:30616"/>
    </ligand>
</feature>
<organism>
    <name type="scientific">Bordetella bronchiseptica (strain ATCC BAA-588 / NCTC 13252 / RB50)</name>
    <name type="common">Alcaligenes bronchisepticus</name>
    <dbReference type="NCBI Taxonomy" id="257310"/>
    <lineage>
        <taxon>Bacteria</taxon>
        <taxon>Pseudomonadati</taxon>
        <taxon>Pseudomonadota</taxon>
        <taxon>Betaproteobacteria</taxon>
        <taxon>Burkholderiales</taxon>
        <taxon>Alcaligenaceae</taxon>
        <taxon>Bordetella</taxon>
    </lineage>
</organism>
<sequence>MKVVHTIQDLRDHLRGQNRVAFVPTMGNLHEGHLALMKLARQHGDPVVTSIFVNRLQFGPNEDFDRYPRTLPDDVAKMERDRDVYLVFAPDEREMYPEPQNYRVLPPDDLGDILEGEFRPGFFTGVCTVVMKLLACVQPRVAVFGKKDYQQLMVVRNMCRQLQLPVEILAHETVRADDGLALSSRNRYLSEAERAEAPVLYETLRGIAQRRAGGEQDPAALERVAAQALADRGWKVDYVAVRRQRDLKAPDVAEMSAGEPLVALAAAKLGATRLIDNLEF</sequence>
<accession>Q7WF42</accession>
<keyword id="KW-0067">ATP-binding</keyword>
<keyword id="KW-0963">Cytoplasm</keyword>
<keyword id="KW-0436">Ligase</keyword>
<keyword id="KW-0547">Nucleotide-binding</keyword>
<keyword id="KW-0566">Pantothenate biosynthesis</keyword>
<name>PANC_BORBR</name>
<comment type="function">
    <text evidence="1">Catalyzes the condensation of pantoate with beta-alanine in an ATP-dependent reaction via a pantoyl-adenylate intermediate.</text>
</comment>
<comment type="catalytic activity">
    <reaction evidence="1">
        <text>(R)-pantoate + beta-alanine + ATP = (R)-pantothenate + AMP + diphosphate + H(+)</text>
        <dbReference type="Rhea" id="RHEA:10912"/>
        <dbReference type="ChEBI" id="CHEBI:15378"/>
        <dbReference type="ChEBI" id="CHEBI:15980"/>
        <dbReference type="ChEBI" id="CHEBI:29032"/>
        <dbReference type="ChEBI" id="CHEBI:30616"/>
        <dbReference type="ChEBI" id="CHEBI:33019"/>
        <dbReference type="ChEBI" id="CHEBI:57966"/>
        <dbReference type="ChEBI" id="CHEBI:456215"/>
        <dbReference type="EC" id="6.3.2.1"/>
    </reaction>
</comment>
<comment type="pathway">
    <text evidence="1">Cofactor biosynthesis; (R)-pantothenate biosynthesis; (R)-pantothenate from (R)-pantoate and beta-alanine: step 1/1.</text>
</comment>
<comment type="subunit">
    <text evidence="1">Homodimer.</text>
</comment>
<comment type="subcellular location">
    <subcellularLocation>
        <location evidence="1">Cytoplasm</location>
    </subcellularLocation>
</comment>
<comment type="miscellaneous">
    <text evidence="1">The reaction proceeds by a bi uni uni bi ping pong mechanism.</text>
</comment>
<comment type="similarity">
    <text evidence="1">Belongs to the pantothenate synthetase family.</text>
</comment>
<evidence type="ECO:0000255" key="1">
    <source>
        <dbReference type="HAMAP-Rule" id="MF_00158"/>
    </source>
</evidence>
<dbReference type="EC" id="6.3.2.1" evidence="1"/>
<dbReference type="EMBL" id="BX640450">
    <property type="protein sequence ID" value="CAE34801.1"/>
    <property type="molecule type" value="Genomic_DNA"/>
</dbReference>
<dbReference type="RefSeq" id="WP_003815051.1">
    <property type="nucleotide sequence ID" value="NC_002927.3"/>
</dbReference>
<dbReference type="SMR" id="Q7WF42"/>
<dbReference type="GeneID" id="93205764"/>
<dbReference type="KEGG" id="bbr:BB4438"/>
<dbReference type="eggNOG" id="COG0414">
    <property type="taxonomic scope" value="Bacteria"/>
</dbReference>
<dbReference type="HOGENOM" id="CLU_047148_0_0_4"/>
<dbReference type="UniPathway" id="UPA00028">
    <property type="reaction ID" value="UER00005"/>
</dbReference>
<dbReference type="Proteomes" id="UP000001027">
    <property type="component" value="Chromosome"/>
</dbReference>
<dbReference type="GO" id="GO:0005829">
    <property type="term" value="C:cytosol"/>
    <property type="evidence" value="ECO:0007669"/>
    <property type="project" value="TreeGrafter"/>
</dbReference>
<dbReference type="GO" id="GO:0005524">
    <property type="term" value="F:ATP binding"/>
    <property type="evidence" value="ECO:0007669"/>
    <property type="project" value="UniProtKB-KW"/>
</dbReference>
<dbReference type="GO" id="GO:0004592">
    <property type="term" value="F:pantoate-beta-alanine ligase activity"/>
    <property type="evidence" value="ECO:0007669"/>
    <property type="project" value="UniProtKB-UniRule"/>
</dbReference>
<dbReference type="GO" id="GO:0015940">
    <property type="term" value="P:pantothenate biosynthetic process"/>
    <property type="evidence" value="ECO:0007669"/>
    <property type="project" value="UniProtKB-UniRule"/>
</dbReference>
<dbReference type="CDD" id="cd00560">
    <property type="entry name" value="PanC"/>
    <property type="match status" value="1"/>
</dbReference>
<dbReference type="Gene3D" id="3.40.50.620">
    <property type="entry name" value="HUPs"/>
    <property type="match status" value="1"/>
</dbReference>
<dbReference type="Gene3D" id="3.30.1300.10">
    <property type="entry name" value="Pantoate-beta-alanine ligase, C-terminal domain"/>
    <property type="match status" value="1"/>
</dbReference>
<dbReference type="HAMAP" id="MF_00158">
    <property type="entry name" value="PanC"/>
    <property type="match status" value="1"/>
</dbReference>
<dbReference type="InterPro" id="IPR004821">
    <property type="entry name" value="Cyt_trans-like"/>
</dbReference>
<dbReference type="InterPro" id="IPR003721">
    <property type="entry name" value="Pantoate_ligase"/>
</dbReference>
<dbReference type="InterPro" id="IPR042176">
    <property type="entry name" value="Pantoate_ligase_C"/>
</dbReference>
<dbReference type="InterPro" id="IPR014729">
    <property type="entry name" value="Rossmann-like_a/b/a_fold"/>
</dbReference>
<dbReference type="NCBIfam" id="TIGR00125">
    <property type="entry name" value="cyt_tran_rel"/>
    <property type="match status" value="1"/>
</dbReference>
<dbReference type="NCBIfam" id="TIGR00018">
    <property type="entry name" value="panC"/>
    <property type="match status" value="1"/>
</dbReference>
<dbReference type="PANTHER" id="PTHR21299">
    <property type="entry name" value="CYTIDYLATE KINASE/PANTOATE-BETA-ALANINE LIGASE"/>
    <property type="match status" value="1"/>
</dbReference>
<dbReference type="PANTHER" id="PTHR21299:SF1">
    <property type="entry name" value="PANTOATE--BETA-ALANINE LIGASE"/>
    <property type="match status" value="1"/>
</dbReference>
<dbReference type="Pfam" id="PF02569">
    <property type="entry name" value="Pantoate_ligase"/>
    <property type="match status" value="1"/>
</dbReference>
<dbReference type="SUPFAM" id="SSF52374">
    <property type="entry name" value="Nucleotidylyl transferase"/>
    <property type="match status" value="1"/>
</dbReference>
<proteinExistence type="inferred from homology"/>